<feature type="chain" id="PRO_0000193313" description="Ubiquinone/menaquinone biosynthesis C-methyltransferase UbiE">
    <location>
        <begin position="1"/>
        <end position="256"/>
    </location>
</feature>
<feature type="binding site" evidence="1">
    <location>
        <position position="79"/>
    </location>
    <ligand>
        <name>S-adenosyl-L-methionine</name>
        <dbReference type="ChEBI" id="CHEBI:59789"/>
    </ligand>
</feature>
<feature type="binding site" evidence="1">
    <location>
        <position position="100"/>
    </location>
    <ligand>
        <name>S-adenosyl-L-methionine</name>
        <dbReference type="ChEBI" id="CHEBI:59789"/>
    </ligand>
</feature>
<feature type="binding site" evidence="1">
    <location>
        <begin position="128"/>
        <end position="129"/>
    </location>
    <ligand>
        <name>S-adenosyl-L-methionine</name>
        <dbReference type="ChEBI" id="CHEBI:59789"/>
    </ligand>
</feature>
<name>UBIE_PSESM</name>
<dbReference type="EC" id="2.1.1.163" evidence="1"/>
<dbReference type="EC" id="2.1.1.201" evidence="1"/>
<dbReference type="EMBL" id="AE016853">
    <property type="protein sequence ID" value="AAO58576.1"/>
    <property type="molecule type" value="Genomic_DNA"/>
</dbReference>
<dbReference type="RefSeq" id="NP_794881.1">
    <property type="nucleotide sequence ID" value="NC_004578.1"/>
</dbReference>
<dbReference type="RefSeq" id="WP_003378884.1">
    <property type="nucleotide sequence ID" value="NC_004578.1"/>
</dbReference>
<dbReference type="SMR" id="Q87UZ2"/>
<dbReference type="STRING" id="223283.PSPTO_5150"/>
<dbReference type="GeneID" id="61789093"/>
<dbReference type="KEGG" id="pst:PSPTO_5150"/>
<dbReference type="PATRIC" id="fig|223283.9.peg.5271"/>
<dbReference type="eggNOG" id="COG2226">
    <property type="taxonomic scope" value="Bacteria"/>
</dbReference>
<dbReference type="HOGENOM" id="CLU_037990_0_0_6"/>
<dbReference type="OrthoDB" id="9808140at2"/>
<dbReference type="PhylomeDB" id="Q87UZ2"/>
<dbReference type="UniPathway" id="UPA00079">
    <property type="reaction ID" value="UER00169"/>
</dbReference>
<dbReference type="UniPathway" id="UPA00232"/>
<dbReference type="Proteomes" id="UP000002515">
    <property type="component" value="Chromosome"/>
</dbReference>
<dbReference type="GO" id="GO:0008425">
    <property type="term" value="F:2-methoxy-6-polyprenyl-1,4-benzoquinol methyltransferase activity"/>
    <property type="evidence" value="ECO:0007669"/>
    <property type="project" value="UniProtKB-UniRule"/>
</dbReference>
<dbReference type="GO" id="GO:0043770">
    <property type="term" value="F:demethylmenaquinone methyltransferase activity"/>
    <property type="evidence" value="ECO:0007669"/>
    <property type="project" value="UniProtKB-UniRule"/>
</dbReference>
<dbReference type="GO" id="GO:0009060">
    <property type="term" value="P:aerobic respiration"/>
    <property type="evidence" value="ECO:0007669"/>
    <property type="project" value="UniProtKB-UniRule"/>
</dbReference>
<dbReference type="GO" id="GO:0009234">
    <property type="term" value="P:menaquinone biosynthetic process"/>
    <property type="evidence" value="ECO:0007669"/>
    <property type="project" value="UniProtKB-UniRule"/>
</dbReference>
<dbReference type="GO" id="GO:0032259">
    <property type="term" value="P:methylation"/>
    <property type="evidence" value="ECO:0007669"/>
    <property type="project" value="UniProtKB-KW"/>
</dbReference>
<dbReference type="CDD" id="cd02440">
    <property type="entry name" value="AdoMet_MTases"/>
    <property type="match status" value="1"/>
</dbReference>
<dbReference type="FunFam" id="3.40.50.150:FF:000014">
    <property type="entry name" value="Ubiquinone/menaquinone biosynthesis C-methyltransferase UbiE"/>
    <property type="match status" value="1"/>
</dbReference>
<dbReference type="Gene3D" id="3.40.50.150">
    <property type="entry name" value="Vaccinia Virus protein VP39"/>
    <property type="match status" value="1"/>
</dbReference>
<dbReference type="HAMAP" id="MF_01813">
    <property type="entry name" value="MenG_UbiE_methyltr"/>
    <property type="match status" value="1"/>
</dbReference>
<dbReference type="InterPro" id="IPR029063">
    <property type="entry name" value="SAM-dependent_MTases_sf"/>
</dbReference>
<dbReference type="InterPro" id="IPR004033">
    <property type="entry name" value="UbiE/COQ5_MeTrFase"/>
</dbReference>
<dbReference type="InterPro" id="IPR023576">
    <property type="entry name" value="UbiE/COQ5_MeTrFase_CS"/>
</dbReference>
<dbReference type="NCBIfam" id="TIGR01934">
    <property type="entry name" value="MenG_MenH_UbiE"/>
    <property type="match status" value="1"/>
</dbReference>
<dbReference type="NCBIfam" id="NF001240">
    <property type="entry name" value="PRK00216.1-1"/>
    <property type="match status" value="1"/>
</dbReference>
<dbReference type="NCBIfam" id="NF001244">
    <property type="entry name" value="PRK00216.1-5"/>
    <property type="match status" value="1"/>
</dbReference>
<dbReference type="PANTHER" id="PTHR43591:SF24">
    <property type="entry name" value="2-METHOXY-6-POLYPRENYL-1,4-BENZOQUINOL METHYLASE, MITOCHONDRIAL"/>
    <property type="match status" value="1"/>
</dbReference>
<dbReference type="PANTHER" id="PTHR43591">
    <property type="entry name" value="METHYLTRANSFERASE"/>
    <property type="match status" value="1"/>
</dbReference>
<dbReference type="Pfam" id="PF01209">
    <property type="entry name" value="Ubie_methyltran"/>
    <property type="match status" value="1"/>
</dbReference>
<dbReference type="SUPFAM" id="SSF53335">
    <property type="entry name" value="S-adenosyl-L-methionine-dependent methyltransferases"/>
    <property type="match status" value="1"/>
</dbReference>
<dbReference type="PROSITE" id="PS51608">
    <property type="entry name" value="SAM_MT_UBIE"/>
    <property type="match status" value="1"/>
</dbReference>
<dbReference type="PROSITE" id="PS01183">
    <property type="entry name" value="UBIE_1"/>
    <property type="match status" value="1"/>
</dbReference>
<dbReference type="PROSITE" id="PS01184">
    <property type="entry name" value="UBIE_2"/>
    <property type="match status" value="1"/>
</dbReference>
<evidence type="ECO:0000255" key="1">
    <source>
        <dbReference type="HAMAP-Rule" id="MF_01813"/>
    </source>
</evidence>
<comment type="function">
    <text evidence="1">Methyltransferase required for the conversion of demethylmenaquinol (DMKH2) to menaquinol (MKH2) and the conversion of 2-polyprenyl-6-methoxy-1,4-benzoquinol (DDMQH2) to 2-polyprenyl-3-methyl-6-methoxy-1,4-benzoquinol (DMQH2).</text>
</comment>
<comment type="catalytic activity">
    <reaction evidence="1">
        <text>a 2-demethylmenaquinol + S-adenosyl-L-methionine = a menaquinol + S-adenosyl-L-homocysteine + H(+)</text>
        <dbReference type="Rhea" id="RHEA:42640"/>
        <dbReference type="Rhea" id="RHEA-COMP:9539"/>
        <dbReference type="Rhea" id="RHEA-COMP:9563"/>
        <dbReference type="ChEBI" id="CHEBI:15378"/>
        <dbReference type="ChEBI" id="CHEBI:18151"/>
        <dbReference type="ChEBI" id="CHEBI:55437"/>
        <dbReference type="ChEBI" id="CHEBI:57856"/>
        <dbReference type="ChEBI" id="CHEBI:59789"/>
        <dbReference type="EC" id="2.1.1.163"/>
    </reaction>
</comment>
<comment type="catalytic activity">
    <reaction evidence="1">
        <text>a 2-methoxy-6-(all-trans-polyprenyl)benzene-1,4-diol + S-adenosyl-L-methionine = a 5-methoxy-2-methyl-3-(all-trans-polyprenyl)benzene-1,4-diol + S-adenosyl-L-homocysteine + H(+)</text>
        <dbReference type="Rhea" id="RHEA:28286"/>
        <dbReference type="Rhea" id="RHEA-COMP:10858"/>
        <dbReference type="Rhea" id="RHEA-COMP:10859"/>
        <dbReference type="ChEBI" id="CHEBI:15378"/>
        <dbReference type="ChEBI" id="CHEBI:57856"/>
        <dbReference type="ChEBI" id="CHEBI:59789"/>
        <dbReference type="ChEBI" id="CHEBI:84166"/>
        <dbReference type="ChEBI" id="CHEBI:84167"/>
        <dbReference type="EC" id="2.1.1.201"/>
    </reaction>
</comment>
<comment type="pathway">
    <text evidence="1">Quinol/quinone metabolism; menaquinone biosynthesis; menaquinol from 1,4-dihydroxy-2-naphthoate: step 2/2.</text>
</comment>
<comment type="pathway">
    <text evidence="1">Cofactor biosynthesis; ubiquinone biosynthesis.</text>
</comment>
<comment type="similarity">
    <text evidence="1">Belongs to the class I-like SAM-binding methyltransferase superfamily. MenG/UbiE family.</text>
</comment>
<organism>
    <name type="scientific">Pseudomonas syringae pv. tomato (strain ATCC BAA-871 / DC3000)</name>
    <dbReference type="NCBI Taxonomy" id="223283"/>
    <lineage>
        <taxon>Bacteria</taxon>
        <taxon>Pseudomonadati</taxon>
        <taxon>Pseudomonadota</taxon>
        <taxon>Gammaproteobacteria</taxon>
        <taxon>Pseudomonadales</taxon>
        <taxon>Pseudomonadaceae</taxon>
        <taxon>Pseudomonas</taxon>
    </lineage>
</organism>
<gene>
    <name evidence="1" type="primary">ubiE</name>
    <name type="ordered locus">PSPTO_5150</name>
</gene>
<accession>Q87UZ2</accession>
<protein>
    <recommendedName>
        <fullName evidence="1">Ubiquinone/menaquinone biosynthesis C-methyltransferase UbiE</fullName>
        <ecNumber evidence="1">2.1.1.163</ecNumber>
        <ecNumber evidence="1">2.1.1.201</ecNumber>
    </recommendedName>
    <alternativeName>
        <fullName evidence="1">2-methoxy-6-polyprenyl-1,4-benzoquinol methylase</fullName>
    </alternativeName>
    <alternativeName>
        <fullName evidence="1">Demethylmenaquinone methyltransferase</fullName>
    </alternativeName>
</protein>
<reference key="1">
    <citation type="journal article" date="2003" name="Proc. Natl. Acad. Sci. U.S.A.">
        <title>The complete genome sequence of the Arabidopsis and tomato pathogen Pseudomonas syringae pv. tomato DC3000.</title>
        <authorList>
            <person name="Buell C.R."/>
            <person name="Joardar V."/>
            <person name="Lindeberg M."/>
            <person name="Selengut J."/>
            <person name="Paulsen I.T."/>
            <person name="Gwinn M.L."/>
            <person name="Dodson R.J."/>
            <person name="DeBoy R.T."/>
            <person name="Durkin A.S."/>
            <person name="Kolonay J.F."/>
            <person name="Madupu R."/>
            <person name="Daugherty S.C."/>
            <person name="Brinkac L.M."/>
            <person name="Beanan M.J."/>
            <person name="Haft D.H."/>
            <person name="Nelson W.C."/>
            <person name="Davidsen T.M."/>
            <person name="Zafar N."/>
            <person name="Zhou L."/>
            <person name="Liu J."/>
            <person name="Yuan Q."/>
            <person name="Khouri H.M."/>
            <person name="Fedorova N.B."/>
            <person name="Tran B."/>
            <person name="Russell D."/>
            <person name="Berry K.J."/>
            <person name="Utterback T.R."/>
            <person name="Van Aken S.E."/>
            <person name="Feldblyum T.V."/>
            <person name="D'Ascenzo M."/>
            <person name="Deng W.-L."/>
            <person name="Ramos A.R."/>
            <person name="Alfano J.R."/>
            <person name="Cartinhour S."/>
            <person name="Chatterjee A.K."/>
            <person name="Delaney T.P."/>
            <person name="Lazarowitz S.G."/>
            <person name="Martin G.B."/>
            <person name="Schneider D.J."/>
            <person name="Tang X."/>
            <person name="Bender C.L."/>
            <person name="White O."/>
            <person name="Fraser C.M."/>
            <person name="Collmer A."/>
        </authorList>
    </citation>
    <scope>NUCLEOTIDE SEQUENCE [LARGE SCALE GENOMIC DNA]</scope>
    <source>
        <strain>ATCC BAA-871 / DC3000</strain>
    </source>
</reference>
<sequence>MNDQRKGSDAEPTTHFGYKNVPESQKAEKVAEVFHSVAAKYDLMNDLLSGGMHRLWKRFAIELSGVRTGNRVLDIAGGTGDLTRKFSNLVGPTGQVVLADINASMLKVGRDRLLDLGVSGNVEFVQADAEKLPFPDNHFDCVTIAFGLRNVTHKEDALRSMLRVLKPGGRLLVLEFSKPTNKLMSKAYDAYSFAFMPLMGKLVTNDSESYRYLAESIRMHPNQETLKSMMVDAGFDRVTYHNMTAGVVALHRGIKP</sequence>
<proteinExistence type="inferred from homology"/>
<keyword id="KW-0474">Menaquinone biosynthesis</keyword>
<keyword id="KW-0489">Methyltransferase</keyword>
<keyword id="KW-1185">Reference proteome</keyword>
<keyword id="KW-0949">S-adenosyl-L-methionine</keyword>
<keyword id="KW-0808">Transferase</keyword>
<keyword id="KW-0831">Ubiquinone biosynthesis</keyword>